<organism>
    <name type="scientific">Arabidopsis thaliana</name>
    <name type="common">Mouse-ear cress</name>
    <dbReference type="NCBI Taxonomy" id="3702"/>
    <lineage>
        <taxon>Eukaryota</taxon>
        <taxon>Viridiplantae</taxon>
        <taxon>Streptophyta</taxon>
        <taxon>Embryophyta</taxon>
        <taxon>Tracheophyta</taxon>
        <taxon>Spermatophyta</taxon>
        <taxon>Magnoliopsida</taxon>
        <taxon>eudicotyledons</taxon>
        <taxon>Gunneridae</taxon>
        <taxon>Pentapetalae</taxon>
        <taxon>rosids</taxon>
        <taxon>malvids</taxon>
        <taxon>Brassicales</taxon>
        <taxon>Brassicaceae</taxon>
        <taxon>Camelineae</taxon>
        <taxon>Arabidopsis</taxon>
    </lineage>
</organism>
<protein>
    <recommendedName>
        <fullName>Probable 3-hydroxyisobutyrate dehydrogenase-like 2, mitochondrial</fullName>
        <shortName>HIBADH-like</shortName>
        <ecNumber>1.1.1.31</ecNumber>
    </recommendedName>
</protein>
<keyword id="KW-0101">Branched-chain amino acid catabolism</keyword>
<keyword id="KW-0496">Mitochondrion</keyword>
<keyword id="KW-0520">NAD</keyword>
<keyword id="KW-0560">Oxidoreductase</keyword>
<keyword id="KW-1185">Reference proteome</keyword>
<name>3HID2_ARATH</name>
<gene>
    <name type="ordered locus">At1g71170</name>
    <name type="ORF">F23N20.16</name>
</gene>
<proteinExistence type="evidence at transcript level"/>
<reference key="1">
    <citation type="journal article" date="2000" name="Nature">
        <title>Sequence and analysis of chromosome 1 of the plant Arabidopsis thaliana.</title>
        <authorList>
            <person name="Theologis A."/>
            <person name="Ecker J.R."/>
            <person name="Palm C.J."/>
            <person name="Federspiel N.A."/>
            <person name="Kaul S."/>
            <person name="White O."/>
            <person name="Alonso J."/>
            <person name="Altafi H."/>
            <person name="Araujo R."/>
            <person name="Bowman C.L."/>
            <person name="Brooks S.Y."/>
            <person name="Buehler E."/>
            <person name="Chan A."/>
            <person name="Chao Q."/>
            <person name="Chen H."/>
            <person name="Cheuk R.F."/>
            <person name="Chin C.W."/>
            <person name="Chung M.K."/>
            <person name="Conn L."/>
            <person name="Conway A.B."/>
            <person name="Conway A.R."/>
            <person name="Creasy T.H."/>
            <person name="Dewar K."/>
            <person name="Dunn P."/>
            <person name="Etgu P."/>
            <person name="Feldblyum T.V."/>
            <person name="Feng J.-D."/>
            <person name="Fong B."/>
            <person name="Fujii C.Y."/>
            <person name="Gill J.E."/>
            <person name="Goldsmith A.D."/>
            <person name="Haas B."/>
            <person name="Hansen N.F."/>
            <person name="Hughes B."/>
            <person name="Huizar L."/>
            <person name="Hunter J.L."/>
            <person name="Jenkins J."/>
            <person name="Johnson-Hopson C."/>
            <person name="Khan S."/>
            <person name="Khaykin E."/>
            <person name="Kim C.J."/>
            <person name="Koo H.L."/>
            <person name="Kremenetskaia I."/>
            <person name="Kurtz D.B."/>
            <person name="Kwan A."/>
            <person name="Lam B."/>
            <person name="Langin-Hooper S."/>
            <person name="Lee A."/>
            <person name="Lee J.M."/>
            <person name="Lenz C.A."/>
            <person name="Li J.H."/>
            <person name="Li Y.-P."/>
            <person name="Lin X."/>
            <person name="Liu S.X."/>
            <person name="Liu Z.A."/>
            <person name="Luros J.S."/>
            <person name="Maiti R."/>
            <person name="Marziali A."/>
            <person name="Militscher J."/>
            <person name="Miranda M."/>
            <person name="Nguyen M."/>
            <person name="Nierman W.C."/>
            <person name="Osborne B.I."/>
            <person name="Pai G."/>
            <person name="Peterson J."/>
            <person name="Pham P.K."/>
            <person name="Rizzo M."/>
            <person name="Rooney T."/>
            <person name="Rowley D."/>
            <person name="Sakano H."/>
            <person name="Salzberg S.L."/>
            <person name="Schwartz J.R."/>
            <person name="Shinn P."/>
            <person name="Southwick A.M."/>
            <person name="Sun H."/>
            <person name="Tallon L.J."/>
            <person name="Tambunga G."/>
            <person name="Toriumi M.J."/>
            <person name="Town C.D."/>
            <person name="Utterback T."/>
            <person name="Van Aken S."/>
            <person name="Vaysberg M."/>
            <person name="Vysotskaia V.S."/>
            <person name="Walker M."/>
            <person name="Wu D."/>
            <person name="Yu G."/>
            <person name="Fraser C.M."/>
            <person name="Venter J.C."/>
            <person name="Davis R.W."/>
        </authorList>
    </citation>
    <scope>NUCLEOTIDE SEQUENCE [LARGE SCALE GENOMIC DNA]</scope>
    <source>
        <strain>cv. Columbia</strain>
    </source>
</reference>
<reference key="2">
    <citation type="journal article" date="2017" name="Plant J.">
        <title>Araport11: a complete reannotation of the Arabidopsis thaliana reference genome.</title>
        <authorList>
            <person name="Cheng C.Y."/>
            <person name="Krishnakumar V."/>
            <person name="Chan A.P."/>
            <person name="Thibaud-Nissen F."/>
            <person name="Schobel S."/>
            <person name="Town C.D."/>
        </authorList>
    </citation>
    <scope>GENOME REANNOTATION</scope>
    <source>
        <strain>cv. Columbia</strain>
    </source>
</reference>
<reference key="3">
    <citation type="submission" date="2006-07" db="EMBL/GenBank/DDBJ databases">
        <title>Large-scale analysis of RIKEN Arabidopsis full-length (RAFL) cDNAs.</title>
        <authorList>
            <person name="Totoki Y."/>
            <person name="Seki M."/>
            <person name="Ishida J."/>
            <person name="Nakajima M."/>
            <person name="Enju A."/>
            <person name="Kamiya A."/>
            <person name="Narusaka M."/>
            <person name="Shin-i T."/>
            <person name="Nakagawa M."/>
            <person name="Sakamoto N."/>
            <person name="Oishi K."/>
            <person name="Kohara Y."/>
            <person name="Kobayashi M."/>
            <person name="Toyoda A."/>
            <person name="Sakaki Y."/>
            <person name="Sakurai T."/>
            <person name="Iida K."/>
            <person name="Akiyama K."/>
            <person name="Satou M."/>
            <person name="Toyoda T."/>
            <person name="Konagaya A."/>
            <person name="Carninci P."/>
            <person name="Kawai J."/>
            <person name="Hayashizaki Y."/>
            <person name="Shinozaki K."/>
        </authorList>
    </citation>
    <scope>NUCLEOTIDE SEQUENCE [LARGE SCALE MRNA]</scope>
    <source>
        <strain>cv. Columbia</strain>
    </source>
</reference>
<sequence length="299" mass="31438">METQYPKLIEPSKTRIGWIGIGIMGSAMVSHILAAGYSVTVYARDLRKTKDLQTKGGRTANSPKELGEMSDVVFTIVGNSNDVRSLLLGDDGVLSGLKPGGVTVDMTSSKPGLAREIYAEARRRDCWAVDAPVSGGDAGAREGKLTIFAGGDSEIVEWLAPVMKTMGIVRFMGGAGSGQSCKIGNQICVGSNMIGLAEGIVFAEKAGLDPVKWLEAVKDGAAGSAVMRLFGEMMAVRDYKATGFAEYMVKDLGMAAEAAMAMPGTALNKQLFTVMVANGDGKLGFQGVVDVIRRLNGLS</sequence>
<evidence type="ECO:0000250" key="1"/>
<evidence type="ECO:0000305" key="2"/>
<feature type="chain" id="PRO_0000421118" description="Probable 3-hydroxyisobutyrate dehydrogenase-like 2, mitochondrial">
    <location>
        <begin position="1"/>
        <end position="299"/>
    </location>
</feature>
<feature type="active site" evidence="1">
    <location>
        <position position="182"/>
    </location>
</feature>
<feature type="binding site" evidence="1">
    <location>
        <begin position="14"/>
        <end position="43"/>
    </location>
    <ligand>
        <name>NAD(+)</name>
        <dbReference type="ChEBI" id="CHEBI:57540"/>
    </ligand>
</feature>
<feature type="binding site" evidence="1">
    <location>
        <position position="108"/>
    </location>
    <ligand>
        <name>NAD(+)</name>
        <dbReference type="ChEBI" id="CHEBI:57540"/>
    </ligand>
</feature>
<feature type="binding site" evidence="1">
    <location>
        <position position="250"/>
    </location>
    <ligand>
        <name>NAD(+)</name>
        <dbReference type="ChEBI" id="CHEBI:57540"/>
    </ligand>
</feature>
<comment type="catalytic activity">
    <reaction>
        <text>3-hydroxy-2-methylpropanoate + NAD(+) = 2-methyl-3-oxopropanoate + NADH + H(+)</text>
        <dbReference type="Rhea" id="RHEA:17681"/>
        <dbReference type="ChEBI" id="CHEBI:11805"/>
        <dbReference type="ChEBI" id="CHEBI:15378"/>
        <dbReference type="ChEBI" id="CHEBI:57540"/>
        <dbReference type="ChEBI" id="CHEBI:57700"/>
        <dbReference type="ChEBI" id="CHEBI:57945"/>
        <dbReference type="EC" id="1.1.1.31"/>
    </reaction>
</comment>
<comment type="pathway">
    <text>Amino-acid degradation; L-valine degradation.</text>
</comment>
<comment type="subcellular location">
    <subcellularLocation>
        <location evidence="1">Mitochondrion</location>
    </subcellularLocation>
</comment>
<comment type="similarity">
    <text evidence="2">Belongs to the HIBADH-related family. 3-hydroxyisobutyrate dehydrogenase subfamily.</text>
</comment>
<dbReference type="EC" id="1.1.1.31"/>
<dbReference type="EMBL" id="AC016972">
    <property type="protein sequence ID" value="AAG51697.1"/>
    <property type="molecule type" value="Genomic_DNA"/>
</dbReference>
<dbReference type="EMBL" id="CP002684">
    <property type="protein sequence ID" value="AEE35168.1"/>
    <property type="molecule type" value="Genomic_DNA"/>
</dbReference>
<dbReference type="EMBL" id="AK229143">
    <property type="protein sequence ID" value="BAF01017.1"/>
    <property type="molecule type" value="mRNA"/>
</dbReference>
<dbReference type="PIR" id="D96736">
    <property type="entry name" value="D96736"/>
</dbReference>
<dbReference type="RefSeq" id="NP_565013.2">
    <property type="nucleotide sequence ID" value="NM_105786.3"/>
</dbReference>
<dbReference type="SMR" id="Q9C991"/>
<dbReference type="FunCoup" id="Q9C991">
    <property type="interactions" value="66"/>
</dbReference>
<dbReference type="STRING" id="3702.Q9C991"/>
<dbReference type="PaxDb" id="3702-AT1G71170.1"/>
<dbReference type="ProteomicsDB" id="244590"/>
<dbReference type="EnsemblPlants" id="AT1G71170.1">
    <property type="protein sequence ID" value="AT1G71170.1"/>
    <property type="gene ID" value="AT1G71170"/>
</dbReference>
<dbReference type="GeneID" id="843457"/>
<dbReference type="Gramene" id="AT1G71170.1">
    <property type="protein sequence ID" value="AT1G71170.1"/>
    <property type="gene ID" value="AT1G71170"/>
</dbReference>
<dbReference type="KEGG" id="ath:AT1G71170"/>
<dbReference type="Araport" id="AT1G71170"/>
<dbReference type="TAIR" id="AT1G71170"/>
<dbReference type="eggNOG" id="KOG0409">
    <property type="taxonomic scope" value="Eukaryota"/>
</dbReference>
<dbReference type="HOGENOM" id="CLU_035117_1_0_1"/>
<dbReference type="InParanoid" id="Q9C991"/>
<dbReference type="OMA" id="FLDAPMT"/>
<dbReference type="PhylomeDB" id="Q9C991"/>
<dbReference type="BioCyc" id="ARA:AT1G71170-MONOMER"/>
<dbReference type="UniPathway" id="UPA00362"/>
<dbReference type="PRO" id="PR:Q9C991"/>
<dbReference type="Proteomes" id="UP000006548">
    <property type="component" value="Chromosome 1"/>
</dbReference>
<dbReference type="ExpressionAtlas" id="Q9C991">
    <property type="expression patterns" value="baseline and differential"/>
</dbReference>
<dbReference type="GO" id="GO:0005739">
    <property type="term" value="C:mitochondrion"/>
    <property type="evidence" value="ECO:0007669"/>
    <property type="project" value="UniProtKB-SubCell"/>
</dbReference>
<dbReference type="GO" id="GO:0008442">
    <property type="term" value="F:3-hydroxyisobutyrate dehydrogenase activity"/>
    <property type="evidence" value="ECO:0007669"/>
    <property type="project" value="UniProtKB-EC"/>
</dbReference>
<dbReference type="GO" id="GO:0051287">
    <property type="term" value="F:NAD binding"/>
    <property type="evidence" value="ECO:0007669"/>
    <property type="project" value="InterPro"/>
</dbReference>
<dbReference type="GO" id="GO:0050661">
    <property type="term" value="F:NADP binding"/>
    <property type="evidence" value="ECO:0007669"/>
    <property type="project" value="InterPro"/>
</dbReference>
<dbReference type="GO" id="GO:0006574">
    <property type="term" value="P:valine catabolic process"/>
    <property type="evidence" value="ECO:0007669"/>
    <property type="project" value="UniProtKB-UniPathway"/>
</dbReference>
<dbReference type="Gene3D" id="1.10.1040.10">
    <property type="entry name" value="N-(1-d-carboxylethyl)-l-norvaline Dehydrogenase, domain 2"/>
    <property type="match status" value="1"/>
</dbReference>
<dbReference type="Gene3D" id="3.40.50.720">
    <property type="entry name" value="NAD(P)-binding Rossmann-like Domain"/>
    <property type="match status" value="1"/>
</dbReference>
<dbReference type="InterPro" id="IPR008927">
    <property type="entry name" value="6-PGluconate_DH-like_C_sf"/>
</dbReference>
<dbReference type="InterPro" id="IPR013328">
    <property type="entry name" value="6PGD_dom2"/>
</dbReference>
<dbReference type="InterPro" id="IPR006115">
    <property type="entry name" value="6PGDH_NADP-bd"/>
</dbReference>
<dbReference type="InterPro" id="IPR029154">
    <property type="entry name" value="HIBADH-like_NADP-bd"/>
</dbReference>
<dbReference type="InterPro" id="IPR015815">
    <property type="entry name" value="HIBADH-related"/>
</dbReference>
<dbReference type="InterPro" id="IPR036291">
    <property type="entry name" value="NAD(P)-bd_dom_sf"/>
</dbReference>
<dbReference type="PANTHER" id="PTHR43060">
    <property type="entry name" value="3-HYDROXYISOBUTYRATE DEHYDROGENASE-LIKE 1, MITOCHONDRIAL-RELATED"/>
    <property type="match status" value="1"/>
</dbReference>
<dbReference type="PANTHER" id="PTHR43060:SF13">
    <property type="entry name" value="3-HYDROXYISOBUTYRATE DEHYDROGENASE-LIKE 2, MITOCHONDRIAL-RELATED"/>
    <property type="match status" value="1"/>
</dbReference>
<dbReference type="Pfam" id="PF14833">
    <property type="entry name" value="NAD_binding_11"/>
    <property type="match status" value="1"/>
</dbReference>
<dbReference type="Pfam" id="PF03446">
    <property type="entry name" value="NAD_binding_2"/>
    <property type="match status" value="1"/>
</dbReference>
<dbReference type="PIRSF" id="PIRSF000103">
    <property type="entry name" value="HIBADH"/>
    <property type="match status" value="1"/>
</dbReference>
<dbReference type="SUPFAM" id="SSF48179">
    <property type="entry name" value="6-phosphogluconate dehydrogenase C-terminal domain-like"/>
    <property type="match status" value="1"/>
</dbReference>
<dbReference type="SUPFAM" id="SSF51735">
    <property type="entry name" value="NAD(P)-binding Rossmann-fold domains"/>
    <property type="match status" value="1"/>
</dbReference>
<accession>Q9C991</accession>